<sequence>MHPRYSPAPPPQQQQQMGGPPHQQQGGGGGGGGSMRGPSNAQQLPPQIPRSQNYSNGSSSSAAAAPLTSRSAFPGAPLTASAVALKGALPQRPPAMTSPAAAAAGAALAAGAPYRGAASWTPQGYAPAAAAAAAAVAQQAAYRYTAPLPQPAYAAYTPHTATTPATTTYGQRVPTAASPSNTNSSSSSNTGSQSGTLSTSLSNTTNTNTNMGPNGTVQNQNQQGGEQLSKTNLYIRGLQQGTTDKDLVNMCAQYGTIISTKAILDKTTNKCKGYGFVDFEQPAFAECAVKGLQGKGVQAQMAKQQEQDPTNLYIANLPPHFKETDLEAMLSKYGQVVSTRILRDQQMNSKGVGFARMESREKCEQIIQMFNGNTIPGAKDPLLVKFADGGPKKKNLFKTPDPNARAWRDVSAEGIPVAYDPTMQQNGVSVNVGTPIGVPYSRFSAPQVGGYPVAGSQWIPGYMMTTQVDDQTSYSPQYMQMAAAPQLGVTSYKPEAVNQVQPRGISMMVSGDTGVPYGTMMPQLATLQIGNSYISPTYPYYAPPPTIIPTMPMTDSEQASTAASPDEAYTQYPHQAAPK</sequence>
<reference evidence="4" key="1">
    <citation type="journal article" date="2007" name="Nature">
        <title>Evolution of genes and genomes on the Drosophila phylogeny.</title>
        <authorList>
            <consortium name="Drosophila 12 genomes consortium"/>
        </authorList>
    </citation>
    <scope>NUCLEOTIDE SEQUENCE [LARGE SCALE GENOMIC DNA]</scope>
    <source>
        <strain evidence="4">Rob3c / Tucson 14021-0248.25</strain>
    </source>
</reference>
<proteinExistence type="inferred from homology"/>
<keyword id="KW-0597">Phosphoprotein</keyword>
<keyword id="KW-1185">Reference proteome</keyword>
<keyword id="KW-0677">Repeat</keyword>
<keyword id="KW-0694">RNA-binding</keyword>
<feature type="chain" id="PRO_0000379501" description="Protein alan shepard">
    <location>
        <begin position="1"/>
        <end position="579"/>
    </location>
</feature>
<feature type="domain" description="RRM 1" evidence="2">
    <location>
        <begin position="231"/>
        <end position="304"/>
    </location>
</feature>
<feature type="domain" description="RRM 2" evidence="2">
    <location>
        <begin position="310"/>
        <end position="389"/>
    </location>
</feature>
<feature type="region of interest" description="Disordered" evidence="3">
    <location>
        <begin position="1"/>
        <end position="66"/>
    </location>
</feature>
<feature type="region of interest" description="Disordered" evidence="3">
    <location>
        <begin position="164"/>
        <end position="225"/>
    </location>
</feature>
<feature type="region of interest" description="Disordered" evidence="3">
    <location>
        <begin position="553"/>
        <end position="579"/>
    </location>
</feature>
<feature type="compositionally biased region" description="Pro residues" evidence="3">
    <location>
        <begin position="1"/>
        <end position="12"/>
    </location>
</feature>
<feature type="compositionally biased region" description="Low complexity" evidence="3">
    <location>
        <begin position="13"/>
        <end position="24"/>
    </location>
</feature>
<feature type="compositionally biased region" description="Gly residues" evidence="3">
    <location>
        <begin position="25"/>
        <end position="35"/>
    </location>
</feature>
<feature type="compositionally biased region" description="Polar residues" evidence="3">
    <location>
        <begin position="37"/>
        <end position="54"/>
    </location>
</feature>
<feature type="compositionally biased region" description="Low complexity" evidence="3">
    <location>
        <begin position="55"/>
        <end position="66"/>
    </location>
</feature>
<feature type="compositionally biased region" description="Low complexity" evidence="3">
    <location>
        <begin position="178"/>
        <end position="225"/>
    </location>
</feature>
<feature type="modified residue" description="Phosphotyrosine" evidence="1">
    <location>
        <position position="5"/>
    </location>
</feature>
<feature type="modified residue" description="Phosphotyrosine" evidence="1">
    <location>
        <position position="125"/>
    </location>
</feature>
<feature type="modified residue" description="Phosphotyrosine" evidence="1">
    <location>
        <position position="142"/>
    </location>
</feature>
<protein>
    <recommendedName>
        <fullName>Protein alan shepard</fullName>
    </recommendedName>
</protein>
<dbReference type="EMBL" id="CH480817">
    <property type="protein sequence ID" value="EDW50565.1"/>
    <property type="molecule type" value="Genomic_DNA"/>
</dbReference>
<dbReference type="SMR" id="B4HUE4"/>
<dbReference type="STRING" id="7238.B4HUE4"/>
<dbReference type="EnsemblMetazoa" id="FBtr0196912">
    <property type="protein sequence ID" value="FBpp0195404"/>
    <property type="gene ID" value="FBgn0168857"/>
</dbReference>
<dbReference type="EnsemblMetazoa" id="XM_002035393.1">
    <property type="protein sequence ID" value="XP_002035429.1"/>
    <property type="gene ID" value="LOC6610863"/>
</dbReference>
<dbReference type="GeneID" id="6610863"/>
<dbReference type="KEGG" id="dse:6610863"/>
<dbReference type="HOGENOM" id="CLU_016278_1_0_1"/>
<dbReference type="OMA" id="FESPACA"/>
<dbReference type="PhylomeDB" id="B4HUE4"/>
<dbReference type="Proteomes" id="UP000001292">
    <property type="component" value="Unassembled WGS sequence"/>
</dbReference>
<dbReference type="GO" id="GO:1990904">
    <property type="term" value="C:ribonucleoprotein complex"/>
    <property type="evidence" value="ECO:0007669"/>
    <property type="project" value="InterPro"/>
</dbReference>
<dbReference type="GO" id="GO:0003723">
    <property type="term" value="F:RNA binding"/>
    <property type="evidence" value="ECO:0007669"/>
    <property type="project" value="UniProtKB-KW"/>
</dbReference>
<dbReference type="GO" id="GO:0009629">
    <property type="term" value="P:response to gravity"/>
    <property type="evidence" value="ECO:0000250"/>
    <property type="project" value="UniProtKB"/>
</dbReference>
<dbReference type="CDD" id="cd12243">
    <property type="entry name" value="RRM1_MSSP"/>
    <property type="match status" value="1"/>
</dbReference>
<dbReference type="CDD" id="cd12244">
    <property type="entry name" value="RRM2_MSSP"/>
    <property type="match status" value="1"/>
</dbReference>
<dbReference type="FunFam" id="3.30.70.330:FF:000169">
    <property type="entry name" value="protein alan shepard isoform X4"/>
    <property type="match status" value="1"/>
</dbReference>
<dbReference type="FunFam" id="3.30.70.330:FF:000491">
    <property type="entry name" value="protein alan shepard isoform X6"/>
    <property type="match status" value="1"/>
</dbReference>
<dbReference type="Gene3D" id="3.30.70.330">
    <property type="match status" value="2"/>
</dbReference>
<dbReference type="InterPro" id="IPR002343">
    <property type="entry name" value="Hud_Sxl_RNA"/>
</dbReference>
<dbReference type="InterPro" id="IPR012677">
    <property type="entry name" value="Nucleotide-bd_a/b_plait_sf"/>
</dbReference>
<dbReference type="InterPro" id="IPR035979">
    <property type="entry name" value="RBD_domain_sf"/>
</dbReference>
<dbReference type="InterPro" id="IPR000504">
    <property type="entry name" value="RRM_dom"/>
</dbReference>
<dbReference type="PANTHER" id="PTHR24012">
    <property type="entry name" value="RNA BINDING PROTEIN"/>
    <property type="match status" value="1"/>
</dbReference>
<dbReference type="Pfam" id="PF00076">
    <property type="entry name" value="RRM_1"/>
    <property type="match status" value="2"/>
</dbReference>
<dbReference type="PRINTS" id="PR00961">
    <property type="entry name" value="HUDSXLRNA"/>
</dbReference>
<dbReference type="SMART" id="SM00360">
    <property type="entry name" value="RRM"/>
    <property type="match status" value="2"/>
</dbReference>
<dbReference type="SUPFAM" id="SSF54928">
    <property type="entry name" value="RNA-binding domain, RBD"/>
    <property type="match status" value="2"/>
</dbReference>
<dbReference type="PROSITE" id="PS50102">
    <property type="entry name" value="RRM"/>
    <property type="match status" value="2"/>
</dbReference>
<comment type="function">
    <text evidence="1">Has a role in the perception of gravity.</text>
</comment>
<comment type="miscellaneous">
    <text>Named after Alan Bartlett Shepard, Jr. who was the second person and the first American in space and the fifth person to walk on the moon.</text>
</comment>
<name>SHEP_DROSE</name>
<accession>B4HUE4</accession>
<evidence type="ECO:0000250" key="1">
    <source>
        <dbReference type="UniProtKB" id="Q8MSV2"/>
    </source>
</evidence>
<evidence type="ECO:0000255" key="2">
    <source>
        <dbReference type="PROSITE-ProRule" id="PRU00176"/>
    </source>
</evidence>
<evidence type="ECO:0000256" key="3">
    <source>
        <dbReference type="SAM" id="MobiDB-lite"/>
    </source>
</evidence>
<evidence type="ECO:0000312" key="4">
    <source>
        <dbReference type="EMBL" id="EDW50565.1"/>
    </source>
</evidence>
<organism>
    <name type="scientific">Drosophila sechellia</name>
    <name type="common">Fruit fly</name>
    <dbReference type="NCBI Taxonomy" id="7238"/>
    <lineage>
        <taxon>Eukaryota</taxon>
        <taxon>Metazoa</taxon>
        <taxon>Ecdysozoa</taxon>
        <taxon>Arthropoda</taxon>
        <taxon>Hexapoda</taxon>
        <taxon>Insecta</taxon>
        <taxon>Pterygota</taxon>
        <taxon>Neoptera</taxon>
        <taxon>Endopterygota</taxon>
        <taxon>Diptera</taxon>
        <taxon>Brachycera</taxon>
        <taxon>Muscomorpha</taxon>
        <taxon>Ephydroidea</taxon>
        <taxon>Drosophilidae</taxon>
        <taxon>Drosophila</taxon>
        <taxon>Sophophora</taxon>
    </lineage>
</organism>
<gene>
    <name evidence="1" type="primary">shep</name>
    <name type="ORF">GM13927</name>
</gene>